<evidence type="ECO:0000250" key="1">
    <source>
        <dbReference type="UniProtKB" id="Q9QYF9"/>
    </source>
</evidence>
<evidence type="ECO:0000250" key="2">
    <source>
        <dbReference type="UniProtKB" id="Q9UGV2"/>
    </source>
</evidence>
<evidence type="ECO:0000256" key="3">
    <source>
        <dbReference type="SAM" id="MobiDB-lite"/>
    </source>
</evidence>
<evidence type="ECO:0000305" key="4"/>
<evidence type="ECO:0007744" key="5">
    <source>
    </source>
</evidence>
<keyword id="KW-0007">Acetylation</keyword>
<keyword id="KW-0597">Phosphoprotein</keyword>
<keyword id="KW-1185">Reference proteome</keyword>
<comment type="similarity">
    <text evidence="4">Belongs to the NDRG family.</text>
</comment>
<organism>
    <name type="scientific">Rattus norvegicus</name>
    <name type="common">Rat</name>
    <dbReference type="NCBI Taxonomy" id="10116"/>
    <lineage>
        <taxon>Eukaryota</taxon>
        <taxon>Metazoa</taxon>
        <taxon>Chordata</taxon>
        <taxon>Craniata</taxon>
        <taxon>Vertebrata</taxon>
        <taxon>Euteleostomi</taxon>
        <taxon>Mammalia</taxon>
        <taxon>Eutheria</taxon>
        <taxon>Euarchontoglires</taxon>
        <taxon>Glires</taxon>
        <taxon>Rodentia</taxon>
        <taxon>Myomorpha</taxon>
        <taxon>Muroidea</taxon>
        <taxon>Muridae</taxon>
        <taxon>Murinae</taxon>
        <taxon>Rattus</taxon>
    </lineage>
</organism>
<dbReference type="EMBL" id="BC078946">
    <property type="protein sequence ID" value="AAH78946.1"/>
    <property type="molecule type" value="mRNA"/>
</dbReference>
<dbReference type="RefSeq" id="NP_001013945.1">
    <property type="nucleotide sequence ID" value="NM_001013923.2"/>
</dbReference>
<dbReference type="RefSeq" id="XP_063139452.1">
    <property type="nucleotide sequence ID" value="XM_063283382.1"/>
</dbReference>
<dbReference type="SMR" id="Q6AYR2"/>
<dbReference type="FunCoup" id="Q6AYR2">
    <property type="interactions" value="2902"/>
</dbReference>
<dbReference type="STRING" id="10116.ENSRNOP00000052106"/>
<dbReference type="ESTHER" id="ratno-q6ayr2">
    <property type="family name" value="Ndr_family"/>
</dbReference>
<dbReference type="iPTMnet" id="Q6AYR2"/>
<dbReference type="PhosphoSitePlus" id="Q6AYR2"/>
<dbReference type="jPOST" id="Q6AYR2"/>
<dbReference type="PaxDb" id="10116-ENSRNOP00000052106"/>
<dbReference type="Ensembl" id="ENSRNOT00000103585.1">
    <property type="protein sequence ID" value="ENSRNOP00000087669.1"/>
    <property type="gene ID" value="ENSRNOG00000036813.4"/>
</dbReference>
<dbReference type="Ensembl" id="ENSRNOT00000109829.1">
    <property type="protein sequence ID" value="ENSRNOP00000086721.1"/>
    <property type="gene ID" value="ENSRNOG00000036813.4"/>
</dbReference>
<dbReference type="GeneID" id="296318"/>
<dbReference type="KEGG" id="rno:296318"/>
<dbReference type="UCSC" id="RGD:1359424">
    <property type="organism name" value="rat"/>
</dbReference>
<dbReference type="AGR" id="RGD:1359424"/>
<dbReference type="CTD" id="57446"/>
<dbReference type="RGD" id="1359424">
    <property type="gene designation" value="Ndrg3"/>
</dbReference>
<dbReference type="eggNOG" id="KOG2931">
    <property type="taxonomic scope" value="Eukaryota"/>
</dbReference>
<dbReference type="GeneTree" id="ENSGT00950000182872"/>
<dbReference type="InParanoid" id="Q6AYR2"/>
<dbReference type="OMA" id="ITQYFAV"/>
<dbReference type="PhylomeDB" id="Q6AYR2"/>
<dbReference type="PRO" id="PR:Q6AYR2"/>
<dbReference type="Proteomes" id="UP000002494">
    <property type="component" value="Chromosome 3"/>
</dbReference>
<dbReference type="GO" id="GO:0005737">
    <property type="term" value="C:cytoplasm"/>
    <property type="evidence" value="ECO:0000266"/>
    <property type="project" value="RGD"/>
</dbReference>
<dbReference type="GO" id="GO:0046697">
    <property type="term" value="P:decidualization"/>
    <property type="evidence" value="ECO:0000266"/>
    <property type="project" value="RGD"/>
</dbReference>
<dbReference type="GO" id="GO:0007165">
    <property type="term" value="P:signal transduction"/>
    <property type="evidence" value="ECO:0000318"/>
    <property type="project" value="GO_Central"/>
</dbReference>
<dbReference type="FunFam" id="3.40.50.1820:FF:000006">
    <property type="entry name" value="NDRG family member 3"/>
    <property type="match status" value="1"/>
</dbReference>
<dbReference type="Gene3D" id="3.40.50.1820">
    <property type="entry name" value="alpha/beta hydrolase"/>
    <property type="match status" value="1"/>
</dbReference>
<dbReference type="InterPro" id="IPR029058">
    <property type="entry name" value="AB_hydrolase_fold"/>
</dbReference>
<dbReference type="InterPro" id="IPR004142">
    <property type="entry name" value="NDRG"/>
</dbReference>
<dbReference type="PANTHER" id="PTHR11034">
    <property type="entry name" value="N-MYC DOWNSTREAM REGULATED"/>
    <property type="match status" value="1"/>
</dbReference>
<dbReference type="Pfam" id="PF03096">
    <property type="entry name" value="Ndr"/>
    <property type="match status" value="1"/>
</dbReference>
<dbReference type="SUPFAM" id="SSF53474">
    <property type="entry name" value="alpha/beta-Hydrolases"/>
    <property type="match status" value="1"/>
</dbReference>
<protein>
    <recommendedName>
        <fullName>Protein NDRG3</fullName>
    </recommendedName>
    <alternativeName>
        <fullName>N-myc downstream-regulated gene 3 protein</fullName>
    </alternativeName>
</protein>
<proteinExistence type="evidence at protein level"/>
<name>NDRG3_RAT</name>
<accession>Q6AYR2</accession>
<feature type="chain" id="PRO_0000357054" description="Protein NDRG3">
    <location>
        <begin position="1"/>
        <end position="375"/>
    </location>
</feature>
<feature type="region of interest" description="Disordered" evidence="3">
    <location>
        <begin position="326"/>
        <end position="375"/>
    </location>
</feature>
<feature type="compositionally biased region" description="Low complexity" evidence="3">
    <location>
        <begin position="330"/>
        <end position="346"/>
    </location>
</feature>
<feature type="compositionally biased region" description="Polar residues" evidence="3">
    <location>
        <begin position="347"/>
        <end position="359"/>
    </location>
</feature>
<feature type="compositionally biased region" description="Basic and acidic residues" evidence="3">
    <location>
        <begin position="364"/>
        <end position="375"/>
    </location>
</feature>
<feature type="modified residue" description="N-acetylmethionine" evidence="2">
    <location>
        <position position="1"/>
    </location>
</feature>
<feature type="modified residue" description="Phosphothreonine" evidence="2">
    <location>
        <position position="322"/>
    </location>
</feature>
<feature type="modified residue" description="Phosphothreonine" evidence="2">
    <location>
        <position position="329"/>
    </location>
</feature>
<feature type="modified residue" description="Phosphoserine" evidence="2">
    <location>
        <position position="331"/>
    </location>
</feature>
<feature type="modified residue" description="Phosphothreonine" evidence="2">
    <location>
        <position position="332"/>
    </location>
</feature>
<feature type="modified residue" description="Phosphoserine" evidence="2">
    <location>
        <position position="334"/>
    </location>
</feature>
<feature type="modified residue" description="Phosphoserine" evidence="2">
    <location>
        <position position="335"/>
    </location>
</feature>
<feature type="modified residue" description="Phosphoserine" evidence="5">
    <location>
        <position position="338"/>
    </location>
</feature>
<feature type="modified residue" description="Phosphoserine" evidence="5">
    <location>
        <position position="341"/>
    </location>
</feature>
<feature type="modified residue" description="Phosphoserine" evidence="2">
    <location>
        <position position="352"/>
    </location>
</feature>
<feature type="modified residue" description="Phosphothreonine" evidence="2">
    <location>
        <position position="355"/>
    </location>
</feature>
<feature type="modified residue" description="Phosphoserine" evidence="1">
    <location>
        <position position="361"/>
    </location>
</feature>
<feature type="modified residue" description="Phosphoserine" evidence="2">
    <location>
        <position position="374"/>
    </location>
</feature>
<sequence length="375" mass="41507">MDELQDVQLTEIKPLLNDKNGTRNFQDFDCQEHDIETPHGMVHVTIRGLPKGNRPVILTYHDIGLNHKSCFNTFFNFEDMQEITQHFAVCHVDAPGQQEAAPSFPTGYQYPTMDELAEMLPPVLTHLSMKSIIGIGVGAGAYILSRFALNHPELVEGLVLINIDPCAKGWIDWAASKLSGLTTNVVDIILAHHFGQEELQANLDLIQTYRLHIAQDINQENLQLFLGSYNGRRDLEIERPILGQNDNRLKTLKCSTLLVVGDNSPAVEAVVECNSRLDPINTTLLKMADCGGLPQVVQPGKLTEAFKYFLQGMGYIPSASMTRLARSRTHSTSSSIGSGESPFSRSVTSNQSDGTQESCESPDVLDRHQTMEVSC</sequence>
<reference key="1">
    <citation type="journal article" date="2004" name="Genome Res.">
        <title>The status, quality, and expansion of the NIH full-length cDNA project: the Mammalian Gene Collection (MGC).</title>
        <authorList>
            <consortium name="The MGC Project Team"/>
        </authorList>
    </citation>
    <scope>NUCLEOTIDE SEQUENCE [LARGE SCALE MRNA]</scope>
    <source>
        <tissue>Kidney</tissue>
    </source>
</reference>
<reference key="2">
    <citation type="journal article" date="2012" name="Nat. Commun.">
        <title>Quantitative maps of protein phosphorylation sites across 14 different rat organs and tissues.</title>
        <authorList>
            <person name="Lundby A."/>
            <person name="Secher A."/>
            <person name="Lage K."/>
            <person name="Nordsborg N.B."/>
            <person name="Dmytriyev A."/>
            <person name="Lundby C."/>
            <person name="Olsen J.V."/>
        </authorList>
    </citation>
    <scope>PHOSPHORYLATION [LARGE SCALE ANALYSIS] AT SER-338 AND SER-341</scope>
    <scope>IDENTIFICATION BY MASS SPECTROMETRY [LARGE SCALE ANALYSIS]</scope>
</reference>
<gene>
    <name type="primary">Ndrg3</name>
    <name type="synonym">Ndr3</name>
</gene>